<keyword id="KW-0067">ATP-binding</keyword>
<keyword id="KW-0131">Cell cycle</keyword>
<keyword id="KW-0132">Cell division</keyword>
<keyword id="KW-0133">Cell shape</keyword>
<keyword id="KW-0961">Cell wall biogenesis/degradation</keyword>
<keyword id="KW-0963">Cytoplasm</keyword>
<keyword id="KW-0436">Ligase</keyword>
<keyword id="KW-0547">Nucleotide-binding</keyword>
<keyword id="KW-0573">Peptidoglycan synthesis</keyword>
<keyword id="KW-1185">Reference proteome</keyword>
<proteinExistence type="inferred from homology"/>
<protein>
    <recommendedName>
        <fullName evidence="1">UDP-N-acetylmuramate--L-alanine ligase</fullName>
        <ecNumber evidence="1">6.3.2.8</ecNumber>
    </recommendedName>
    <alternativeName>
        <fullName evidence="1">UDP-N-acetylmuramoyl-L-alanine synthetase</fullName>
    </alternativeName>
</protein>
<sequence>MVEPQVAPIAPMMRRIRRIHFVGIGGVGMGGIAEVLLNLGYQISGSDLRKNQLIQRLLSLGAQIRIGHDPQHVEGCDVVVVSSAIDEDNTEVSAARGRLIPVVPRAEMLAELMRFRYGIAVAGTHGKTTTTSLIAGILGEANLDPTFVIGGQVNSIGANSRLGKGEYLVAEADESDASFLLLQPLLAVITNVDADHMDAYGGDFTALKAAFLEFLHHLPFYGLAVVCLDDPVLRELLPGIGRPVLTYGTCKEADYHLRELKQTQGQTQFQVARPGKDNWLTVVLNLPGAHNALNALAAIAVAHELGIADSAIQRFLKGFSGIGRRFQCYGEIATPAGKVLLVDDYGHHPRELAATLEAIRAGWPERRLVVIFQPHRYTRTRDLFEEFIRVLSQVDVLLLLEVYPAGEAPIGGADSRALWQAIQTHGQVSPILVEDKEIIGEMLFDLLQEGDLLLTVGAGDIGALARRLSISLEGKR</sequence>
<accession>Q3J790</accession>
<feature type="chain" id="PRO_0000242568" description="UDP-N-acetylmuramate--L-alanine ligase">
    <location>
        <begin position="1"/>
        <end position="476"/>
    </location>
</feature>
<feature type="binding site" evidence="1">
    <location>
        <begin position="123"/>
        <end position="129"/>
    </location>
    <ligand>
        <name>ATP</name>
        <dbReference type="ChEBI" id="CHEBI:30616"/>
    </ligand>
</feature>
<gene>
    <name evidence="1" type="primary">murC</name>
    <name type="ordered locus">Noc_2860</name>
</gene>
<organism>
    <name type="scientific">Nitrosococcus oceani (strain ATCC 19707 / BCRC 17464 / JCM 30415 / NCIMB 11848 / C-107)</name>
    <dbReference type="NCBI Taxonomy" id="323261"/>
    <lineage>
        <taxon>Bacteria</taxon>
        <taxon>Pseudomonadati</taxon>
        <taxon>Pseudomonadota</taxon>
        <taxon>Gammaproteobacteria</taxon>
        <taxon>Chromatiales</taxon>
        <taxon>Chromatiaceae</taxon>
        <taxon>Nitrosococcus</taxon>
    </lineage>
</organism>
<dbReference type="EC" id="6.3.2.8" evidence="1"/>
<dbReference type="EMBL" id="CP000127">
    <property type="protein sequence ID" value="ABA59306.1"/>
    <property type="molecule type" value="Genomic_DNA"/>
</dbReference>
<dbReference type="RefSeq" id="WP_011331081.1">
    <property type="nucleotide sequence ID" value="NC_007484.1"/>
</dbReference>
<dbReference type="SMR" id="Q3J790"/>
<dbReference type="FunCoup" id="Q3J790">
    <property type="interactions" value="317"/>
</dbReference>
<dbReference type="STRING" id="323261.Noc_2860"/>
<dbReference type="KEGG" id="noc:Noc_2860"/>
<dbReference type="eggNOG" id="COG0773">
    <property type="taxonomic scope" value="Bacteria"/>
</dbReference>
<dbReference type="HOGENOM" id="CLU_028104_2_2_6"/>
<dbReference type="InParanoid" id="Q3J790"/>
<dbReference type="UniPathway" id="UPA00219"/>
<dbReference type="Proteomes" id="UP000006838">
    <property type="component" value="Chromosome"/>
</dbReference>
<dbReference type="GO" id="GO:0005737">
    <property type="term" value="C:cytoplasm"/>
    <property type="evidence" value="ECO:0007669"/>
    <property type="project" value="UniProtKB-SubCell"/>
</dbReference>
<dbReference type="GO" id="GO:0005524">
    <property type="term" value="F:ATP binding"/>
    <property type="evidence" value="ECO:0007669"/>
    <property type="project" value="UniProtKB-UniRule"/>
</dbReference>
<dbReference type="GO" id="GO:0008763">
    <property type="term" value="F:UDP-N-acetylmuramate-L-alanine ligase activity"/>
    <property type="evidence" value="ECO:0007669"/>
    <property type="project" value="UniProtKB-UniRule"/>
</dbReference>
<dbReference type="GO" id="GO:0051301">
    <property type="term" value="P:cell division"/>
    <property type="evidence" value="ECO:0007669"/>
    <property type="project" value="UniProtKB-KW"/>
</dbReference>
<dbReference type="GO" id="GO:0071555">
    <property type="term" value="P:cell wall organization"/>
    <property type="evidence" value="ECO:0007669"/>
    <property type="project" value="UniProtKB-KW"/>
</dbReference>
<dbReference type="GO" id="GO:0009252">
    <property type="term" value="P:peptidoglycan biosynthetic process"/>
    <property type="evidence" value="ECO:0007669"/>
    <property type="project" value="UniProtKB-UniRule"/>
</dbReference>
<dbReference type="GO" id="GO:0008360">
    <property type="term" value="P:regulation of cell shape"/>
    <property type="evidence" value="ECO:0007669"/>
    <property type="project" value="UniProtKB-KW"/>
</dbReference>
<dbReference type="FunFam" id="3.40.1190.10:FF:000001">
    <property type="entry name" value="UDP-N-acetylmuramate--L-alanine ligase"/>
    <property type="match status" value="1"/>
</dbReference>
<dbReference type="Gene3D" id="3.90.190.20">
    <property type="entry name" value="Mur ligase, C-terminal domain"/>
    <property type="match status" value="1"/>
</dbReference>
<dbReference type="Gene3D" id="3.40.1190.10">
    <property type="entry name" value="Mur-like, catalytic domain"/>
    <property type="match status" value="1"/>
</dbReference>
<dbReference type="Gene3D" id="3.40.50.720">
    <property type="entry name" value="NAD(P)-binding Rossmann-like Domain"/>
    <property type="match status" value="1"/>
</dbReference>
<dbReference type="HAMAP" id="MF_00046">
    <property type="entry name" value="MurC"/>
    <property type="match status" value="1"/>
</dbReference>
<dbReference type="InterPro" id="IPR036565">
    <property type="entry name" value="Mur-like_cat_sf"/>
</dbReference>
<dbReference type="InterPro" id="IPR004101">
    <property type="entry name" value="Mur_ligase_C"/>
</dbReference>
<dbReference type="InterPro" id="IPR036615">
    <property type="entry name" value="Mur_ligase_C_dom_sf"/>
</dbReference>
<dbReference type="InterPro" id="IPR013221">
    <property type="entry name" value="Mur_ligase_cen"/>
</dbReference>
<dbReference type="InterPro" id="IPR000713">
    <property type="entry name" value="Mur_ligase_N"/>
</dbReference>
<dbReference type="InterPro" id="IPR050061">
    <property type="entry name" value="MurCDEF_pg_biosynth"/>
</dbReference>
<dbReference type="InterPro" id="IPR005758">
    <property type="entry name" value="UDP-N-AcMur_Ala_ligase_MurC"/>
</dbReference>
<dbReference type="NCBIfam" id="TIGR01082">
    <property type="entry name" value="murC"/>
    <property type="match status" value="1"/>
</dbReference>
<dbReference type="PANTHER" id="PTHR43445:SF3">
    <property type="entry name" value="UDP-N-ACETYLMURAMATE--L-ALANINE LIGASE"/>
    <property type="match status" value="1"/>
</dbReference>
<dbReference type="PANTHER" id="PTHR43445">
    <property type="entry name" value="UDP-N-ACETYLMURAMATE--L-ALANINE LIGASE-RELATED"/>
    <property type="match status" value="1"/>
</dbReference>
<dbReference type="Pfam" id="PF01225">
    <property type="entry name" value="Mur_ligase"/>
    <property type="match status" value="1"/>
</dbReference>
<dbReference type="Pfam" id="PF02875">
    <property type="entry name" value="Mur_ligase_C"/>
    <property type="match status" value="1"/>
</dbReference>
<dbReference type="Pfam" id="PF08245">
    <property type="entry name" value="Mur_ligase_M"/>
    <property type="match status" value="1"/>
</dbReference>
<dbReference type="SUPFAM" id="SSF51984">
    <property type="entry name" value="MurCD N-terminal domain"/>
    <property type="match status" value="1"/>
</dbReference>
<dbReference type="SUPFAM" id="SSF53623">
    <property type="entry name" value="MurD-like peptide ligases, catalytic domain"/>
    <property type="match status" value="1"/>
</dbReference>
<dbReference type="SUPFAM" id="SSF53244">
    <property type="entry name" value="MurD-like peptide ligases, peptide-binding domain"/>
    <property type="match status" value="1"/>
</dbReference>
<name>MURC_NITOC</name>
<reference key="1">
    <citation type="journal article" date="2006" name="Appl. Environ. Microbiol.">
        <title>Complete genome sequence of the marine, chemolithoautotrophic, ammonia-oxidizing bacterium Nitrosococcus oceani ATCC 19707.</title>
        <authorList>
            <person name="Klotz M.G."/>
            <person name="Arp D.J."/>
            <person name="Chain P.S.G."/>
            <person name="El-Sheikh A.F."/>
            <person name="Hauser L.J."/>
            <person name="Hommes N.G."/>
            <person name="Larimer F.W."/>
            <person name="Malfatti S.A."/>
            <person name="Norton J.M."/>
            <person name="Poret-Peterson A.T."/>
            <person name="Vergez L.M."/>
            <person name="Ward B.B."/>
        </authorList>
    </citation>
    <scope>NUCLEOTIDE SEQUENCE [LARGE SCALE GENOMIC DNA]</scope>
    <source>
        <strain>ATCC 19707 / BCRC 17464 / JCM 30415 / NCIMB 11848 / C-107</strain>
    </source>
</reference>
<comment type="function">
    <text evidence="1">Cell wall formation.</text>
</comment>
<comment type="catalytic activity">
    <reaction evidence="1">
        <text>UDP-N-acetyl-alpha-D-muramate + L-alanine + ATP = UDP-N-acetyl-alpha-D-muramoyl-L-alanine + ADP + phosphate + H(+)</text>
        <dbReference type="Rhea" id="RHEA:23372"/>
        <dbReference type="ChEBI" id="CHEBI:15378"/>
        <dbReference type="ChEBI" id="CHEBI:30616"/>
        <dbReference type="ChEBI" id="CHEBI:43474"/>
        <dbReference type="ChEBI" id="CHEBI:57972"/>
        <dbReference type="ChEBI" id="CHEBI:70757"/>
        <dbReference type="ChEBI" id="CHEBI:83898"/>
        <dbReference type="ChEBI" id="CHEBI:456216"/>
        <dbReference type="EC" id="6.3.2.8"/>
    </reaction>
</comment>
<comment type="pathway">
    <text evidence="1">Cell wall biogenesis; peptidoglycan biosynthesis.</text>
</comment>
<comment type="subcellular location">
    <subcellularLocation>
        <location evidence="1">Cytoplasm</location>
    </subcellularLocation>
</comment>
<comment type="similarity">
    <text evidence="1">Belongs to the MurCDEF family.</text>
</comment>
<evidence type="ECO:0000255" key="1">
    <source>
        <dbReference type="HAMAP-Rule" id="MF_00046"/>
    </source>
</evidence>